<keyword id="KW-0025">Alternative splicing</keyword>
<keyword id="KW-0091">Biomineralization</keyword>
<keyword id="KW-0130">Cell adhesion</keyword>
<keyword id="KW-0325">Glycoprotein</keyword>
<keyword id="KW-1185">Reference proteome</keyword>
<keyword id="KW-0964">Secreted</keyword>
<keyword id="KW-0732">Signal</keyword>
<gene>
    <name evidence="8" type="primary">Amtn</name>
    <name type="ORF">EO-017</name>
</gene>
<organism>
    <name type="scientific">Rattus norvegicus</name>
    <name type="common">Rat</name>
    <dbReference type="NCBI Taxonomy" id="10116"/>
    <lineage>
        <taxon>Eukaryota</taxon>
        <taxon>Metazoa</taxon>
        <taxon>Chordata</taxon>
        <taxon>Craniata</taxon>
        <taxon>Vertebrata</taxon>
        <taxon>Euteleostomi</taxon>
        <taxon>Mammalia</taxon>
        <taxon>Eutheria</taxon>
        <taxon>Euarchontoglires</taxon>
        <taxon>Glires</taxon>
        <taxon>Rodentia</taxon>
        <taxon>Myomorpha</taxon>
        <taxon>Muroidea</taxon>
        <taxon>Muridae</taxon>
        <taxon>Murinae</taxon>
        <taxon>Rattus</taxon>
    </lineage>
</organism>
<comment type="function">
    <text evidence="2 4">Is a promoter of calcium phosphate mineralization, playing a critical role in the formation of the compact, mineralized, aprismatic enamel surface layer during the maturation stage of amelogenesis.</text>
</comment>
<comment type="subcellular location">
    <subcellularLocation>
        <location evidence="2">Secreted</location>
    </subcellularLocation>
</comment>
<comment type="alternative products">
    <event type="alternative splicing"/>
    <isoform>
        <id>Q3HS82-1</id>
        <name evidence="4">1</name>
        <sequence type="displayed"/>
    </isoform>
    <isoform>
        <id>Q3HS82-2</id>
        <name evidence="4">2</name>
        <sequence type="described" ref="VSP_052355"/>
    </isoform>
    <isoform>
        <id>Q3HS82-3</id>
        <name evidence="4">3</name>
        <sequence type="described" ref="VSP_052354"/>
    </isoform>
</comment>
<comment type="tissue specificity">
    <text evidence="4">Highest expression in the mandible. Found in the basal lamina of maturation stage ameloblasts of incisors and unerupted molars. Also found in the internal basal lamina of junctional epithelium in molars.</text>
</comment>
<comment type="developmental stage">
    <text evidence="4">Expressed in ameloblasts as they undergo post-secretory transition. Expression decreases as ameloblasts progress through maturation.</text>
</comment>
<comment type="PTM">
    <text evidence="7">O-glycosylated.</text>
</comment>
<comment type="PTM">
    <text evidence="1">Phosphorylated by FAM20C in vitro.</text>
</comment>
<comment type="similarity">
    <text evidence="6">Belongs to the amelotin family.</text>
</comment>
<protein>
    <recommendedName>
        <fullName>Amelotin</fullName>
    </recommendedName>
</protein>
<sequence length="212" mass="22080">MKTVVLLLCLLGSAQSLPRQLSPALGAPATKPTPGQVTPLTQQQPNQVFPSISLIPLTQLLTLGSDLPLFNPATMPHGTQTLPFTLGPLNGQQQLQPQMLPIIVAQLGAQGALLSSEELPLASQIFTGLLIHPLFPGAIQPSGQTGAKPDVQNGALPTRQAGASPANQATTPGHTTPAVTDDDDYEMSTPAGLQRATHTTEGTTMDPPNRTK</sequence>
<reference evidence="6" key="1">
    <citation type="journal article" date="2006" name="Biochem. J.">
        <title>Cloning of rat amelotin and localization of the protein to the basal lamina of maturation stage ameloblasts and junctional epithelium.</title>
        <authorList>
            <person name="Moffatt P."/>
            <person name="Smith C.E."/>
            <person name="St Arnaud R."/>
            <person name="Simmons D."/>
            <person name="Wright J.T."/>
            <person name="Nanci A."/>
        </authorList>
    </citation>
    <scope>NUCLEOTIDE SEQUENCE [MRNA] (ISOFORMS 1; 2 AND 3)</scope>
    <scope>GLYCOSYLATION</scope>
    <scope>TISSUE SPECIFICITY</scope>
    <scope>DEVELOPMENTAL STAGE</scope>
    <scope>FUNCTION</scope>
    <source>
        <strain evidence="4">Wistar</strain>
        <tissue evidence="4">Enamel organ</tissue>
    </source>
</reference>
<reference evidence="6 8" key="2">
    <citation type="journal article" date="2007" name="Int. J. Mol. Med.">
        <title>Expression of phosphoproteins and amelotin in teeth.</title>
        <authorList>
            <person name="Trueb B."/>
            <person name="Taeschler S."/>
            <person name="Schild C."/>
            <person name="Lang N.P."/>
        </authorList>
    </citation>
    <scope>NUCLEOTIDE SEQUENCE [MRNA] (ISOFORM 1)</scope>
    <source>
        <strain evidence="8">Wistar</strain>
        <tissue evidence="8">Incisor</tissue>
    </source>
</reference>
<feature type="signal peptide" evidence="1">
    <location>
        <begin position="1"/>
        <end position="16"/>
    </location>
</feature>
<feature type="chain" id="PRO_5000140668" description="Amelotin" evidence="1">
    <location>
        <begin position="17"/>
        <end position="212"/>
    </location>
</feature>
<feature type="region of interest" description="Disordered" evidence="3">
    <location>
        <begin position="23"/>
        <end position="42"/>
    </location>
</feature>
<feature type="region of interest" description="Disordered" evidence="3">
    <location>
        <begin position="141"/>
        <end position="212"/>
    </location>
</feature>
<feature type="compositionally biased region" description="Polar residues" evidence="3">
    <location>
        <begin position="33"/>
        <end position="42"/>
    </location>
</feature>
<feature type="compositionally biased region" description="Polar residues" evidence="3">
    <location>
        <begin position="165"/>
        <end position="178"/>
    </location>
</feature>
<feature type="splice variant" id="VSP_052354" description="In isoform 3." evidence="5">
    <location>
        <begin position="19"/>
        <end position="119"/>
    </location>
</feature>
<feature type="splice variant" id="VSP_052355" description="In isoform 2." evidence="5">
    <location>
        <begin position="111"/>
        <end position="119"/>
    </location>
</feature>
<evidence type="ECO:0000250" key="1">
    <source>
        <dbReference type="UniProtKB" id="Q6UX39"/>
    </source>
</evidence>
<evidence type="ECO:0000250" key="2">
    <source>
        <dbReference type="UniProtKB" id="Q9D3J8"/>
    </source>
</evidence>
<evidence type="ECO:0000256" key="3">
    <source>
        <dbReference type="SAM" id="MobiDB-lite"/>
    </source>
</evidence>
<evidence type="ECO:0000269" key="4">
    <source>
    </source>
</evidence>
<evidence type="ECO:0000303" key="5">
    <source>
    </source>
</evidence>
<evidence type="ECO:0000305" key="6"/>
<evidence type="ECO:0000305" key="7">
    <source>
    </source>
</evidence>
<evidence type="ECO:0000312" key="8">
    <source>
        <dbReference type="EMBL" id="CAJ77764.1"/>
    </source>
</evidence>
<accession>Q3HS82</accession>
<dbReference type="EMBL" id="DQ198381">
    <property type="protein sequence ID" value="ABA54405.1"/>
    <property type="molecule type" value="mRNA"/>
</dbReference>
<dbReference type="EMBL" id="AM231717">
    <property type="protein sequence ID" value="CAJ77764.1"/>
    <property type="molecule type" value="mRNA"/>
</dbReference>
<dbReference type="RefSeq" id="NP_001037761.1">
    <molecule id="Q3HS82-1"/>
    <property type="nucleotide sequence ID" value="NM_001044296.1"/>
</dbReference>
<dbReference type="RefSeq" id="XP_017454872.1">
    <molecule id="Q3HS82-1"/>
    <property type="nucleotide sequence ID" value="XM_017599383.3"/>
</dbReference>
<dbReference type="FunCoup" id="Q3HS82">
    <property type="interactions" value="3"/>
</dbReference>
<dbReference type="STRING" id="10116.ENSRNOP00000058805"/>
<dbReference type="GlyGen" id="Q3HS82">
    <property type="glycosylation" value="1 site"/>
</dbReference>
<dbReference type="PhosphoSitePlus" id="Q3HS82"/>
<dbReference type="PaxDb" id="10116-ENSRNOP00000058805"/>
<dbReference type="Ensembl" id="ENSRNOT00000065778.4">
    <molecule id="Q3HS82-1"/>
    <property type="protein sequence ID" value="ENSRNOP00000058805.2"/>
    <property type="gene ID" value="ENSRNOG00000003776.8"/>
</dbReference>
<dbReference type="GeneID" id="689404"/>
<dbReference type="KEGG" id="rno:689404"/>
<dbReference type="UCSC" id="RGD:1592356">
    <molecule id="Q3HS82-1"/>
    <property type="organism name" value="rat"/>
</dbReference>
<dbReference type="AGR" id="RGD:1592356"/>
<dbReference type="CTD" id="401138"/>
<dbReference type="RGD" id="1592356">
    <property type="gene designation" value="Amtn"/>
</dbReference>
<dbReference type="eggNOG" id="ENOG502SFV7">
    <property type="taxonomic scope" value="Eukaryota"/>
</dbReference>
<dbReference type="GeneTree" id="ENSGT00390000006715"/>
<dbReference type="HOGENOM" id="CLU_082745_0_0_1"/>
<dbReference type="InParanoid" id="Q3HS82"/>
<dbReference type="OMA" id="PQMLPIF"/>
<dbReference type="OrthoDB" id="90479at9989"/>
<dbReference type="PhylomeDB" id="Q3HS82"/>
<dbReference type="TreeFam" id="TF337677"/>
<dbReference type="Reactome" id="R-RNO-381426">
    <property type="pathway name" value="Regulation of Insulin-like Growth Factor (IGF) transport and uptake by Insulin-like Growth Factor Binding Proteins (IGFBPs)"/>
</dbReference>
<dbReference type="Reactome" id="R-RNO-8957275">
    <property type="pathway name" value="Post-translational protein phosphorylation"/>
</dbReference>
<dbReference type="PRO" id="PR:Q3HS82"/>
<dbReference type="Proteomes" id="UP000002494">
    <property type="component" value="Chromosome 14"/>
</dbReference>
<dbReference type="Bgee" id="ENSRNOG00000003776">
    <property type="expression patterns" value="Expressed in lung and 4 other cell types or tissues"/>
</dbReference>
<dbReference type="GO" id="GO:0005604">
    <property type="term" value="C:basement membrane"/>
    <property type="evidence" value="ECO:0000314"/>
    <property type="project" value="HGNC-UCL"/>
</dbReference>
<dbReference type="GO" id="GO:0005911">
    <property type="term" value="C:cell-cell junction"/>
    <property type="evidence" value="ECO:0000314"/>
    <property type="project" value="HGNC-UCL"/>
</dbReference>
<dbReference type="GO" id="GO:0031012">
    <property type="term" value="C:extracellular matrix"/>
    <property type="evidence" value="ECO:0000314"/>
    <property type="project" value="HGNC-UCL"/>
</dbReference>
<dbReference type="GO" id="GO:0005576">
    <property type="term" value="C:extracellular region"/>
    <property type="evidence" value="ECO:0007669"/>
    <property type="project" value="UniProtKB-SubCell"/>
</dbReference>
<dbReference type="GO" id="GO:0031214">
    <property type="term" value="P:biomineral tissue development"/>
    <property type="evidence" value="ECO:0007669"/>
    <property type="project" value="UniProtKB-KW"/>
</dbReference>
<dbReference type="GO" id="GO:0007155">
    <property type="term" value="P:cell adhesion"/>
    <property type="evidence" value="ECO:0007669"/>
    <property type="project" value="UniProtKB-KW"/>
</dbReference>
<dbReference type="GO" id="GO:0042475">
    <property type="term" value="P:odontogenesis of dentin-containing tooth"/>
    <property type="evidence" value="ECO:0000270"/>
    <property type="project" value="HGNC-UCL"/>
</dbReference>
<dbReference type="GO" id="GO:0070169">
    <property type="term" value="P:positive regulation of biomineral tissue development"/>
    <property type="evidence" value="ECO:0000266"/>
    <property type="project" value="RGD"/>
</dbReference>
<dbReference type="GO" id="GO:0070175">
    <property type="term" value="P:positive regulation of enamel mineralization"/>
    <property type="evidence" value="ECO:0000250"/>
    <property type="project" value="UniProtKB"/>
</dbReference>
<dbReference type="InterPro" id="IPR031501">
    <property type="entry name" value="Amelotin"/>
</dbReference>
<dbReference type="PANTHER" id="PTHR36858">
    <property type="entry name" value="AMELOTIN"/>
    <property type="match status" value="1"/>
</dbReference>
<dbReference type="PANTHER" id="PTHR36858:SF1">
    <property type="entry name" value="AMELOTIN"/>
    <property type="match status" value="1"/>
</dbReference>
<dbReference type="Pfam" id="PF15757">
    <property type="entry name" value="Amelotin"/>
    <property type="match status" value="1"/>
</dbReference>
<name>AMTN_RAT</name>
<proteinExistence type="evidence at protein level"/>